<name>ATPF_CHLSC</name>
<evidence type="ECO:0000255" key="1">
    <source>
        <dbReference type="HAMAP-Rule" id="MF_01398"/>
    </source>
</evidence>
<gene>
    <name evidence="1" type="primary">atpF</name>
</gene>
<accession>A6MMA8</accession>
<organism>
    <name type="scientific">Chloranthus spicatus</name>
    <name type="common">Chulantree</name>
    <name type="synonym">Nigrina spicata</name>
    <dbReference type="NCBI Taxonomy" id="13006"/>
    <lineage>
        <taxon>Eukaryota</taxon>
        <taxon>Viridiplantae</taxon>
        <taxon>Streptophyta</taxon>
        <taxon>Embryophyta</taxon>
        <taxon>Tracheophyta</taxon>
        <taxon>Spermatophyta</taxon>
        <taxon>Magnoliopsida</taxon>
        <taxon>Chloranthales</taxon>
        <taxon>Chloranthaceae</taxon>
        <taxon>Chloranthus</taxon>
    </lineage>
</organism>
<feature type="chain" id="PRO_0000368917" description="ATP synthase subunit b, chloroplastic">
    <location>
        <begin position="1"/>
        <end position="184"/>
    </location>
</feature>
<feature type="transmembrane region" description="Helical" evidence="1">
    <location>
        <begin position="27"/>
        <end position="49"/>
    </location>
</feature>
<protein>
    <recommendedName>
        <fullName evidence="1">ATP synthase subunit b, chloroplastic</fullName>
    </recommendedName>
    <alternativeName>
        <fullName evidence="1">ATP synthase F(0) sector subunit b</fullName>
    </alternativeName>
    <alternativeName>
        <fullName evidence="1">ATPase subunit I</fullName>
    </alternativeName>
</protein>
<geneLocation type="chloroplast"/>
<proteinExistence type="inferred from homology"/>
<keyword id="KW-0066">ATP synthesis</keyword>
<keyword id="KW-0138">CF(0)</keyword>
<keyword id="KW-0150">Chloroplast</keyword>
<keyword id="KW-0375">Hydrogen ion transport</keyword>
<keyword id="KW-0406">Ion transport</keyword>
<keyword id="KW-0472">Membrane</keyword>
<keyword id="KW-0934">Plastid</keyword>
<keyword id="KW-0793">Thylakoid</keyword>
<keyword id="KW-0812">Transmembrane</keyword>
<keyword id="KW-1133">Transmembrane helix</keyword>
<keyword id="KW-0813">Transport</keyword>
<comment type="function">
    <text evidence="1">F(1)F(0) ATP synthase produces ATP from ADP in the presence of a proton or sodium gradient. F-type ATPases consist of two structural domains, F(1) containing the extramembraneous catalytic core and F(0) containing the membrane proton channel, linked together by a central stalk and a peripheral stalk. During catalysis, ATP synthesis in the catalytic domain of F(1) is coupled via a rotary mechanism of the central stalk subunits to proton translocation.</text>
</comment>
<comment type="function">
    <text evidence="1">Component of the F(0) channel, it forms part of the peripheral stalk, linking F(1) to F(0).</text>
</comment>
<comment type="subunit">
    <text evidence="1">F-type ATPases have 2 components, F(1) - the catalytic core - and F(0) - the membrane proton channel. F(1) has five subunits: alpha(3), beta(3), gamma(1), delta(1), epsilon(1). F(0) has four main subunits: a(1), b(1), b'(1) and c(10-14). The alpha and beta chains form an alternating ring which encloses part of the gamma chain. F(1) is attached to F(0) by a central stalk formed by the gamma and epsilon chains, while a peripheral stalk is formed by the delta, b and b' chains.</text>
</comment>
<comment type="subcellular location">
    <subcellularLocation>
        <location evidence="1">Plastid</location>
        <location evidence="1">Chloroplast thylakoid membrane</location>
        <topology evidence="1">Single-pass membrane protein</topology>
    </subcellularLocation>
</comment>
<comment type="miscellaneous">
    <text>In plastids the F-type ATPase is also known as CF(1)CF(0).</text>
</comment>
<comment type="similarity">
    <text evidence="1">Belongs to the ATPase B chain family.</text>
</comment>
<dbReference type="EMBL" id="EF380352">
    <property type="protein sequence ID" value="ABQ43246.1"/>
    <property type="molecule type" value="Genomic_DNA"/>
</dbReference>
<dbReference type="RefSeq" id="YP_001294084.1">
    <property type="nucleotide sequence ID" value="NC_009598.1"/>
</dbReference>
<dbReference type="SMR" id="A6MMA8"/>
<dbReference type="GeneID" id="5236545"/>
<dbReference type="GO" id="GO:0009535">
    <property type="term" value="C:chloroplast thylakoid membrane"/>
    <property type="evidence" value="ECO:0007669"/>
    <property type="project" value="UniProtKB-SubCell"/>
</dbReference>
<dbReference type="GO" id="GO:0045259">
    <property type="term" value="C:proton-transporting ATP synthase complex"/>
    <property type="evidence" value="ECO:0007669"/>
    <property type="project" value="UniProtKB-KW"/>
</dbReference>
<dbReference type="GO" id="GO:0046933">
    <property type="term" value="F:proton-transporting ATP synthase activity, rotational mechanism"/>
    <property type="evidence" value="ECO:0007669"/>
    <property type="project" value="UniProtKB-UniRule"/>
</dbReference>
<dbReference type="CDD" id="cd06503">
    <property type="entry name" value="ATP-synt_Fo_b"/>
    <property type="match status" value="1"/>
</dbReference>
<dbReference type="HAMAP" id="MF_01398">
    <property type="entry name" value="ATP_synth_b_bprime"/>
    <property type="match status" value="1"/>
</dbReference>
<dbReference type="InterPro" id="IPR002146">
    <property type="entry name" value="ATP_synth_b/b'su_bac/chlpt"/>
</dbReference>
<dbReference type="PANTHER" id="PTHR34264">
    <property type="entry name" value="ATP SYNTHASE SUBUNIT B, CHLOROPLASTIC"/>
    <property type="match status" value="1"/>
</dbReference>
<dbReference type="PANTHER" id="PTHR34264:SF3">
    <property type="entry name" value="ATP SYNTHASE SUBUNIT B, CHLOROPLASTIC"/>
    <property type="match status" value="1"/>
</dbReference>
<dbReference type="Pfam" id="PF00430">
    <property type="entry name" value="ATP-synt_B"/>
    <property type="match status" value="1"/>
</dbReference>
<reference key="1">
    <citation type="journal article" date="2007" name="Mol. Phylogenet. Evol.">
        <title>Phylogenetic and evolutionary implications of complete chloroplast genome sequences of four early-diverging angiosperms: Buxus (Buxaceae), Chloranthus (Chloranthaceae), Dioscorea (Dioscoreaceae), and Illicium (Schisandraceae).</title>
        <authorList>
            <person name="Hansen D.R."/>
            <person name="Dastidar S.G."/>
            <person name="Cai Z."/>
            <person name="Penaflor C."/>
            <person name="Kuehl J.V."/>
            <person name="Boore J.L."/>
            <person name="Jansen R.K."/>
        </authorList>
    </citation>
    <scope>NUCLEOTIDE SEQUENCE [LARGE SCALE GENOMIC DNA]</scope>
</reference>
<sequence length="184" mass="20859">MKNITDSFVSVGYWSSAGSFGFNTDILATNPINLSVVLGVLIFFGKGVLSDLLDNRKQRILSTIRNSEELRGGAIEQLEKARARLRKVEMEADEFRVNGYSEIERERVNLINATYENLERLEIYKNETIHFEQQRAINQVRQRVFQQALQGALGTLNSCLNSELHLRTISANIGMFGAMKEITD</sequence>